<keyword id="KW-0963">Cytoplasm</keyword>
<keyword id="KW-0328">Glycosyltransferase</keyword>
<keyword id="KW-0539">Nucleus</keyword>
<keyword id="KW-1185">Reference proteome</keyword>
<keyword id="KW-0808">Transferase</keyword>
<dbReference type="EC" id="2.4.2.1"/>
<dbReference type="EMBL" id="CU329670">
    <property type="protein sequence ID" value="CAB55857.1"/>
    <property type="molecule type" value="Genomic_DNA"/>
</dbReference>
<dbReference type="PIR" id="T37901">
    <property type="entry name" value="T37901"/>
</dbReference>
<dbReference type="RefSeq" id="NP_593927.1">
    <property type="nucleotide sequence ID" value="NM_001019356.2"/>
</dbReference>
<dbReference type="SMR" id="Q9UTG1"/>
<dbReference type="BioGRID" id="278897">
    <property type="interactions" value="14"/>
</dbReference>
<dbReference type="FunCoup" id="Q9UTG1">
    <property type="interactions" value="406"/>
</dbReference>
<dbReference type="STRING" id="284812.Q9UTG1"/>
<dbReference type="iPTMnet" id="Q9UTG1"/>
<dbReference type="PaxDb" id="4896-SPAC1805.16c.1"/>
<dbReference type="EnsemblFungi" id="SPAC1805.16c.1">
    <property type="protein sequence ID" value="SPAC1805.16c.1:pep"/>
    <property type="gene ID" value="SPAC1805.16c"/>
</dbReference>
<dbReference type="KEGG" id="spo:2542435"/>
<dbReference type="PomBase" id="SPAC1805.16c"/>
<dbReference type="VEuPathDB" id="FungiDB:SPAC1805.16c"/>
<dbReference type="eggNOG" id="KOG3984">
    <property type="taxonomic scope" value="Eukaryota"/>
</dbReference>
<dbReference type="HOGENOM" id="CLU_054456_1_2_1"/>
<dbReference type="InParanoid" id="Q9UTG1"/>
<dbReference type="OMA" id="EGVYAQF"/>
<dbReference type="PhylomeDB" id="Q9UTG1"/>
<dbReference type="Reactome" id="R-SPO-6798695">
    <property type="pathway name" value="Neutrophil degranulation"/>
</dbReference>
<dbReference type="Reactome" id="R-SPO-74217">
    <property type="pathway name" value="Purine salvage"/>
</dbReference>
<dbReference type="Reactome" id="R-SPO-74259">
    <property type="pathway name" value="Purine catabolism"/>
</dbReference>
<dbReference type="Reactome" id="R-SPO-9755088">
    <property type="pathway name" value="Ribavirin ADME"/>
</dbReference>
<dbReference type="UniPathway" id="UPA00606"/>
<dbReference type="PRO" id="PR:Q9UTG1"/>
<dbReference type="Proteomes" id="UP000002485">
    <property type="component" value="Chromosome I"/>
</dbReference>
<dbReference type="GO" id="GO:0005737">
    <property type="term" value="C:cytoplasm"/>
    <property type="evidence" value="ECO:0000318"/>
    <property type="project" value="GO_Central"/>
</dbReference>
<dbReference type="GO" id="GO:0005829">
    <property type="term" value="C:cytosol"/>
    <property type="evidence" value="ECO:0007005"/>
    <property type="project" value="PomBase"/>
</dbReference>
<dbReference type="GO" id="GO:0005634">
    <property type="term" value="C:nucleus"/>
    <property type="evidence" value="ECO:0007005"/>
    <property type="project" value="PomBase"/>
</dbReference>
<dbReference type="GO" id="GO:0004731">
    <property type="term" value="F:purine-nucleoside phosphorylase activity"/>
    <property type="evidence" value="ECO:0000318"/>
    <property type="project" value="GO_Central"/>
</dbReference>
<dbReference type="GO" id="GO:0006152">
    <property type="term" value="P:purine nucleoside catabolic process"/>
    <property type="evidence" value="ECO:0000266"/>
    <property type="project" value="PomBase"/>
</dbReference>
<dbReference type="CDD" id="cd09009">
    <property type="entry name" value="PNP-EcPNPII_like"/>
    <property type="match status" value="1"/>
</dbReference>
<dbReference type="FunFam" id="3.40.50.1580:FF:000004">
    <property type="entry name" value="Purine nucleoside phosphorylase"/>
    <property type="match status" value="1"/>
</dbReference>
<dbReference type="Gene3D" id="3.40.50.1580">
    <property type="entry name" value="Nucleoside phosphorylase domain"/>
    <property type="match status" value="1"/>
</dbReference>
<dbReference type="InterPro" id="IPR000845">
    <property type="entry name" value="Nucleoside_phosphorylase_d"/>
</dbReference>
<dbReference type="InterPro" id="IPR035994">
    <property type="entry name" value="Nucleoside_phosphorylase_sf"/>
</dbReference>
<dbReference type="InterPro" id="IPR011270">
    <property type="entry name" value="Pur_Nuc_Pase_Ino/Guo-sp"/>
</dbReference>
<dbReference type="InterPro" id="IPR011268">
    <property type="entry name" value="Purine_phosphorylase"/>
</dbReference>
<dbReference type="NCBIfam" id="TIGR01700">
    <property type="entry name" value="PNPH"/>
    <property type="match status" value="1"/>
</dbReference>
<dbReference type="NCBIfam" id="TIGR01697">
    <property type="entry name" value="PNPH-PUNA-XAPA"/>
    <property type="match status" value="1"/>
</dbReference>
<dbReference type="NCBIfam" id="NF006054">
    <property type="entry name" value="PRK08202.1"/>
    <property type="match status" value="1"/>
</dbReference>
<dbReference type="PANTHER" id="PTHR11904">
    <property type="entry name" value="METHYLTHIOADENOSINE/PURINE NUCLEOSIDE PHOSPHORYLASE"/>
    <property type="match status" value="1"/>
</dbReference>
<dbReference type="PANTHER" id="PTHR11904:SF9">
    <property type="entry name" value="PURINE NUCLEOSIDE PHOSPHORYLASE-RELATED"/>
    <property type="match status" value="1"/>
</dbReference>
<dbReference type="Pfam" id="PF01048">
    <property type="entry name" value="PNP_UDP_1"/>
    <property type="match status" value="1"/>
</dbReference>
<dbReference type="PIRSF" id="PIRSF000477">
    <property type="entry name" value="PurNPase"/>
    <property type="match status" value="1"/>
</dbReference>
<dbReference type="SUPFAM" id="SSF53167">
    <property type="entry name" value="Purine and uridine phosphorylases"/>
    <property type="match status" value="1"/>
</dbReference>
<reference key="1">
    <citation type="journal article" date="2002" name="Nature">
        <title>The genome sequence of Schizosaccharomyces pombe.</title>
        <authorList>
            <person name="Wood V."/>
            <person name="Gwilliam R."/>
            <person name="Rajandream M.A."/>
            <person name="Lyne M.H."/>
            <person name="Lyne R."/>
            <person name="Stewart A."/>
            <person name="Sgouros J.G."/>
            <person name="Peat N."/>
            <person name="Hayles J."/>
            <person name="Baker S.G."/>
            <person name="Basham D."/>
            <person name="Bowman S."/>
            <person name="Brooks K."/>
            <person name="Brown D."/>
            <person name="Brown S."/>
            <person name="Chillingworth T."/>
            <person name="Churcher C.M."/>
            <person name="Collins M."/>
            <person name="Connor R."/>
            <person name="Cronin A."/>
            <person name="Davis P."/>
            <person name="Feltwell T."/>
            <person name="Fraser A."/>
            <person name="Gentles S."/>
            <person name="Goble A."/>
            <person name="Hamlin N."/>
            <person name="Harris D.E."/>
            <person name="Hidalgo J."/>
            <person name="Hodgson G."/>
            <person name="Holroyd S."/>
            <person name="Hornsby T."/>
            <person name="Howarth S."/>
            <person name="Huckle E.J."/>
            <person name="Hunt S."/>
            <person name="Jagels K."/>
            <person name="James K.D."/>
            <person name="Jones L."/>
            <person name="Jones M."/>
            <person name="Leather S."/>
            <person name="McDonald S."/>
            <person name="McLean J."/>
            <person name="Mooney P."/>
            <person name="Moule S."/>
            <person name="Mungall K.L."/>
            <person name="Murphy L.D."/>
            <person name="Niblett D."/>
            <person name="Odell C."/>
            <person name="Oliver K."/>
            <person name="O'Neil S."/>
            <person name="Pearson D."/>
            <person name="Quail M.A."/>
            <person name="Rabbinowitsch E."/>
            <person name="Rutherford K.M."/>
            <person name="Rutter S."/>
            <person name="Saunders D."/>
            <person name="Seeger K."/>
            <person name="Sharp S."/>
            <person name="Skelton J."/>
            <person name="Simmonds M.N."/>
            <person name="Squares R."/>
            <person name="Squares S."/>
            <person name="Stevens K."/>
            <person name="Taylor K."/>
            <person name="Taylor R.G."/>
            <person name="Tivey A."/>
            <person name="Walsh S.V."/>
            <person name="Warren T."/>
            <person name="Whitehead S."/>
            <person name="Woodward J.R."/>
            <person name="Volckaert G."/>
            <person name="Aert R."/>
            <person name="Robben J."/>
            <person name="Grymonprez B."/>
            <person name="Weltjens I."/>
            <person name="Vanstreels E."/>
            <person name="Rieger M."/>
            <person name="Schaefer M."/>
            <person name="Mueller-Auer S."/>
            <person name="Gabel C."/>
            <person name="Fuchs M."/>
            <person name="Duesterhoeft A."/>
            <person name="Fritzc C."/>
            <person name="Holzer E."/>
            <person name="Moestl D."/>
            <person name="Hilbert H."/>
            <person name="Borzym K."/>
            <person name="Langer I."/>
            <person name="Beck A."/>
            <person name="Lehrach H."/>
            <person name="Reinhardt R."/>
            <person name="Pohl T.M."/>
            <person name="Eger P."/>
            <person name="Zimmermann W."/>
            <person name="Wedler H."/>
            <person name="Wambutt R."/>
            <person name="Purnelle B."/>
            <person name="Goffeau A."/>
            <person name="Cadieu E."/>
            <person name="Dreano S."/>
            <person name="Gloux S."/>
            <person name="Lelaure V."/>
            <person name="Mottier S."/>
            <person name="Galibert F."/>
            <person name="Aves S.J."/>
            <person name="Xiang Z."/>
            <person name="Hunt C."/>
            <person name="Moore K."/>
            <person name="Hurst S.M."/>
            <person name="Lucas M."/>
            <person name="Rochet M."/>
            <person name="Gaillardin C."/>
            <person name="Tallada V.A."/>
            <person name="Garzon A."/>
            <person name="Thode G."/>
            <person name="Daga R.R."/>
            <person name="Cruzado L."/>
            <person name="Jimenez J."/>
            <person name="Sanchez M."/>
            <person name="del Rey F."/>
            <person name="Benito J."/>
            <person name="Dominguez A."/>
            <person name="Revuelta J.L."/>
            <person name="Moreno S."/>
            <person name="Armstrong J."/>
            <person name="Forsburg S.L."/>
            <person name="Cerutti L."/>
            <person name="Lowe T."/>
            <person name="McCombie W.R."/>
            <person name="Paulsen I."/>
            <person name="Potashkin J."/>
            <person name="Shpakovski G.V."/>
            <person name="Ussery D."/>
            <person name="Barrell B.G."/>
            <person name="Nurse P."/>
        </authorList>
    </citation>
    <scope>NUCLEOTIDE SEQUENCE [LARGE SCALE GENOMIC DNA]</scope>
    <source>
        <strain>972 / ATCC 24843</strain>
    </source>
</reference>
<reference key="2">
    <citation type="journal article" date="2006" name="Nat. Biotechnol.">
        <title>ORFeome cloning and global analysis of protein localization in the fission yeast Schizosaccharomyces pombe.</title>
        <authorList>
            <person name="Matsuyama A."/>
            <person name="Arai R."/>
            <person name="Yashiroda Y."/>
            <person name="Shirai A."/>
            <person name="Kamata A."/>
            <person name="Sekido S."/>
            <person name="Kobayashi Y."/>
            <person name="Hashimoto A."/>
            <person name="Hamamoto M."/>
            <person name="Hiraoka Y."/>
            <person name="Horinouchi S."/>
            <person name="Yoshida M."/>
        </authorList>
    </citation>
    <scope>SUBCELLULAR LOCATION [LARGE SCALE ANALYSIS]</scope>
</reference>
<feature type="chain" id="PRO_0000316221" description="Putative purine nucleoside phosphorylase">
    <location>
        <begin position="1"/>
        <end position="315"/>
    </location>
</feature>
<feature type="binding site" evidence="2">
    <location>
        <position position="49"/>
    </location>
    <ligand>
        <name>phosphate</name>
        <dbReference type="ChEBI" id="CHEBI:43474"/>
    </ligand>
</feature>
<feature type="binding site" evidence="2">
    <location>
        <position position="81"/>
    </location>
    <ligand>
        <name>phosphate</name>
        <dbReference type="ChEBI" id="CHEBI:43474"/>
    </ligand>
</feature>
<feature type="binding site" evidence="2">
    <location>
        <begin position="103"/>
        <end position="105"/>
    </location>
    <ligand>
        <name>phosphate</name>
        <dbReference type="ChEBI" id="CHEBI:43474"/>
    </ligand>
</feature>
<feature type="binding site" evidence="2">
    <location>
        <position position="135"/>
    </location>
    <ligand>
        <name>phosphate</name>
        <dbReference type="ChEBI" id="CHEBI:43474"/>
    </ligand>
</feature>
<feature type="binding site" evidence="2">
    <location>
        <position position="220"/>
    </location>
    <ligand>
        <name>a purine D-ribonucleoside</name>
        <dbReference type="ChEBI" id="CHEBI:142355"/>
    </ligand>
</feature>
<feature type="binding site" evidence="2">
    <location>
        <position position="239"/>
    </location>
    <ligand>
        <name>phosphate</name>
        <dbReference type="ChEBI" id="CHEBI:43474"/>
    </ligand>
</feature>
<feature type="binding site" evidence="2">
    <location>
        <position position="262"/>
    </location>
    <ligand>
        <name>a purine D-ribonucleoside</name>
        <dbReference type="ChEBI" id="CHEBI:142355"/>
    </ligand>
</feature>
<accession>Q9UTG1</accession>
<gene>
    <name type="ORF">SPAC1805.16c</name>
</gene>
<proteinExistence type="inferred from homology"/>
<comment type="function">
    <text evidence="1">The purine nucleoside phosphorylases catalyze the phosphorolytic breakdown of the N-glycosidic bond in the beta-(deoxy)ribonucleoside molecules, with the formation of the corresponding free purine bases and pentose-1-phosphate. Cleaves guanosine and inosine (By similarity).</text>
</comment>
<comment type="catalytic activity">
    <reaction>
        <text>a purine D-ribonucleoside + phosphate = a purine nucleobase + alpha-D-ribose 1-phosphate</text>
        <dbReference type="Rhea" id="RHEA:19805"/>
        <dbReference type="ChEBI" id="CHEBI:26386"/>
        <dbReference type="ChEBI" id="CHEBI:43474"/>
        <dbReference type="ChEBI" id="CHEBI:57720"/>
        <dbReference type="ChEBI" id="CHEBI:142355"/>
        <dbReference type="EC" id="2.4.2.1"/>
    </reaction>
</comment>
<comment type="pathway">
    <text>Purine metabolism; purine nucleoside salvage.</text>
</comment>
<comment type="subcellular location">
    <subcellularLocation>
        <location evidence="3">Cytoplasm</location>
    </subcellularLocation>
    <subcellularLocation>
        <location evidence="3">Nucleus</location>
    </subcellularLocation>
</comment>
<comment type="similarity">
    <text evidence="4">Belongs to the PNP/MTAP phosphorylase family.</text>
</comment>
<evidence type="ECO:0000250" key="1"/>
<evidence type="ECO:0000250" key="2">
    <source>
        <dbReference type="UniProtKB" id="P55859"/>
    </source>
</evidence>
<evidence type="ECO:0000269" key="3">
    <source>
    </source>
</evidence>
<evidence type="ECO:0000305" key="4"/>
<name>PNPH_SCHPO</name>
<protein>
    <recommendedName>
        <fullName>Putative purine nucleoside phosphorylase</fullName>
        <shortName>PNP</shortName>
        <ecNumber>2.4.2.1</ecNumber>
    </recommendedName>
    <alternativeName>
        <fullName>Inosine phosphorylase</fullName>
    </alternativeName>
    <alternativeName>
        <fullName>Inosine-guanosine phosphorylase</fullName>
    </alternativeName>
</protein>
<sequence length="315" mass="34239">MTATSFLHQAKQQPHHTEPYIKALEAREYIIEQVPEELSKPKVAIICGSGLGTLASGLSAPVYEVPYEDIPHFHVSHVPGHASKLYFAFLGEKRVPTMILAGRYHSYEGYPIEATTFPVRLMKVMGVEVMVVTNAAGGLNQGFKVGDLMILKDHINFPGLAGMNPLRGPNAHEFGVRFPPLSDAYDLELRKLVYDAAKAHKVSRTIHEGCYAFVSGPCFETRAESRMLALMGADCVGMSTVPEVVVARHCGIRVLAISLVTNNVVVEESPSAKDLVEVDSNVMSKGAANHLEVLEVGIAAAADVRTMVETIVNFI</sequence>
<organism>
    <name type="scientific">Schizosaccharomyces pombe (strain 972 / ATCC 24843)</name>
    <name type="common">Fission yeast</name>
    <dbReference type="NCBI Taxonomy" id="284812"/>
    <lineage>
        <taxon>Eukaryota</taxon>
        <taxon>Fungi</taxon>
        <taxon>Dikarya</taxon>
        <taxon>Ascomycota</taxon>
        <taxon>Taphrinomycotina</taxon>
        <taxon>Schizosaccharomycetes</taxon>
        <taxon>Schizosaccharomycetales</taxon>
        <taxon>Schizosaccharomycetaceae</taxon>
        <taxon>Schizosaccharomyces</taxon>
    </lineage>
</organism>